<sequence length="199" mass="22697">MKQSHFFAHLSRMKLINRWPLMRNVRTENVSEHSLQVAMVAHALAAIKNRKFGGQLNAERIALLAMYHDASEVLTGDLPTPVKYFNSQIAQEYKAIEKIAQQKLVDMAPDELRDIFAPLIDENAWSEEEQAIVKQADALCAYLKCLEELSAGNNEFGLAKTRLEKTLELRRSQEMDYFMAVFVPSFHLSLDEISQDSPL</sequence>
<dbReference type="EC" id="3.1.3.89" evidence="1"/>
<dbReference type="EMBL" id="CP001144">
    <property type="protein sequence ID" value="ACH75574.1"/>
    <property type="molecule type" value="Genomic_DNA"/>
</dbReference>
<dbReference type="RefSeq" id="WP_000813882.1">
    <property type="nucleotide sequence ID" value="NC_011205.1"/>
</dbReference>
<dbReference type="SMR" id="B5FPH3"/>
<dbReference type="KEGG" id="sed:SeD_A2680"/>
<dbReference type="HOGENOM" id="CLU_084784_0_0_6"/>
<dbReference type="Proteomes" id="UP000008322">
    <property type="component" value="Chromosome"/>
</dbReference>
<dbReference type="GO" id="GO:0005737">
    <property type="term" value="C:cytoplasm"/>
    <property type="evidence" value="ECO:0007669"/>
    <property type="project" value="UniProtKB-SubCell"/>
</dbReference>
<dbReference type="GO" id="GO:0002953">
    <property type="term" value="F:5'-deoxynucleotidase activity"/>
    <property type="evidence" value="ECO:0007669"/>
    <property type="project" value="UniProtKB-EC"/>
</dbReference>
<dbReference type="GO" id="GO:0046872">
    <property type="term" value="F:metal ion binding"/>
    <property type="evidence" value="ECO:0007669"/>
    <property type="project" value="UniProtKB-KW"/>
</dbReference>
<dbReference type="GO" id="GO:0000166">
    <property type="term" value="F:nucleotide binding"/>
    <property type="evidence" value="ECO:0007669"/>
    <property type="project" value="UniProtKB-KW"/>
</dbReference>
<dbReference type="FunFam" id="1.10.3210.10:FF:000002">
    <property type="entry name" value="Nucleotidase YfbR"/>
    <property type="match status" value="1"/>
</dbReference>
<dbReference type="Gene3D" id="1.10.3210.10">
    <property type="entry name" value="Hypothetical protein af1432"/>
    <property type="match status" value="1"/>
</dbReference>
<dbReference type="HAMAP" id="MF_01100">
    <property type="entry name" value="5DNU"/>
    <property type="match status" value="1"/>
</dbReference>
<dbReference type="InterPro" id="IPR003607">
    <property type="entry name" value="HD/PDEase_dom"/>
</dbReference>
<dbReference type="InterPro" id="IPR006674">
    <property type="entry name" value="HD_domain"/>
</dbReference>
<dbReference type="InterPro" id="IPR022971">
    <property type="entry name" value="YfbR"/>
</dbReference>
<dbReference type="InterPro" id="IPR039356">
    <property type="entry name" value="YfbR/HDDC2"/>
</dbReference>
<dbReference type="NCBIfam" id="NF003009">
    <property type="entry name" value="PRK03826.1"/>
    <property type="match status" value="1"/>
</dbReference>
<dbReference type="PANTHER" id="PTHR11845">
    <property type="entry name" value="5'-DEOXYNUCLEOTIDASE HDDC2"/>
    <property type="match status" value="1"/>
</dbReference>
<dbReference type="PANTHER" id="PTHR11845:SF13">
    <property type="entry name" value="5'-DEOXYNUCLEOTIDASE HDDC2"/>
    <property type="match status" value="1"/>
</dbReference>
<dbReference type="Pfam" id="PF12917">
    <property type="entry name" value="YfbR-like"/>
    <property type="match status" value="1"/>
</dbReference>
<dbReference type="SMART" id="SM00471">
    <property type="entry name" value="HDc"/>
    <property type="match status" value="1"/>
</dbReference>
<dbReference type="SUPFAM" id="SSF109604">
    <property type="entry name" value="HD-domain/PDEase-like"/>
    <property type="match status" value="1"/>
</dbReference>
<dbReference type="PROSITE" id="PS51831">
    <property type="entry name" value="HD"/>
    <property type="match status" value="1"/>
</dbReference>
<proteinExistence type="inferred from homology"/>
<evidence type="ECO:0000255" key="1">
    <source>
        <dbReference type="HAMAP-Rule" id="MF_01100"/>
    </source>
</evidence>
<evidence type="ECO:0000255" key="2">
    <source>
        <dbReference type="PROSITE-ProRule" id="PRU01175"/>
    </source>
</evidence>
<keyword id="KW-0963">Cytoplasm</keyword>
<keyword id="KW-0378">Hydrolase</keyword>
<keyword id="KW-0479">Metal-binding</keyword>
<keyword id="KW-0547">Nucleotide-binding</keyword>
<accession>B5FPH3</accession>
<protein>
    <recommendedName>
        <fullName evidence="1">5'-deoxynucleotidase YfbR</fullName>
        <ecNumber evidence="1">3.1.3.89</ecNumber>
    </recommendedName>
    <alternativeName>
        <fullName evidence="1">5'-deoxyribonucleotidase</fullName>
    </alternativeName>
    <alternativeName>
        <fullName evidence="1">Nucleoside 5'-monophosphate phosphohydrolase</fullName>
    </alternativeName>
</protein>
<comment type="function">
    <text evidence="1">Catalyzes the strictly specific dephosphorylation of 2'-deoxyribonucleoside 5'-monophosphates.</text>
</comment>
<comment type="catalytic activity">
    <reaction evidence="1">
        <text>a 2'-deoxyribonucleoside 5'-phosphate + H2O = a 2'-deoxyribonucleoside + phosphate</text>
        <dbReference type="Rhea" id="RHEA:36167"/>
        <dbReference type="ChEBI" id="CHEBI:15377"/>
        <dbReference type="ChEBI" id="CHEBI:18274"/>
        <dbReference type="ChEBI" id="CHEBI:43474"/>
        <dbReference type="ChEBI" id="CHEBI:65317"/>
        <dbReference type="EC" id="3.1.3.89"/>
    </reaction>
</comment>
<comment type="cofactor">
    <cofactor evidence="1">
        <name>a divalent metal cation</name>
        <dbReference type="ChEBI" id="CHEBI:60240"/>
    </cofactor>
</comment>
<comment type="subunit">
    <text evidence="1">Homodimer.</text>
</comment>
<comment type="subcellular location">
    <subcellularLocation>
        <location evidence="1">Cytoplasm</location>
    </subcellularLocation>
</comment>
<comment type="similarity">
    <text evidence="1">Belongs to the 5DNU family.</text>
</comment>
<organism>
    <name type="scientific">Salmonella dublin (strain CT_02021853)</name>
    <dbReference type="NCBI Taxonomy" id="439851"/>
    <lineage>
        <taxon>Bacteria</taxon>
        <taxon>Pseudomonadati</taxon>
        <taxon>Pseudomonadota</taxon>
        <taxon>Gammaproteobacteria</taxon>
        <taxon>Enterobacterales</taxon>
        <taxon>Enterobacteriaceae</taxon>
        <taxon>Salmonella</taxon>
    </lineage>
</organism>
<name>5DNU_SALDC</name>
<gene>
    <name evidence="1" type="primary">yfbR</name>
    <name type="ordered locus">SeD_A2680</name>
</gene>
<feature type="chain" id="PRO_1000136972" description="5'-deoxynucleotidase YfbR">
    <location>
        <begin position="1"/>
        <end position="199"/>
    </location>
</feature>
<feature type="domain" description="HD" evidence="2">
    <location>
        <begin position="30"/>
        <end position="142"/>
    </location>
</feature>
<feature type="binding site" evidence="1">
    <location>
        <begin position="18"/>
        <end position="19"/>
    </location>
    <ligand>
        <name>substrate</name>
    </ligand>
</feature>
<feature type="binding site" evidence="1">
    <location>
        <position position="33"/>
    </location>
    <ligand>
        <name>a divalent metal cation</name>
        <dbReference type="ChEBI" id="CHEBI:60240"/>
    </ligand>
</feature>
<feature type="binding site" evidence="1">
    <location>
        <position position="33"/>
    </location>
    <ligand>
        <name>substrate</name>
    </ligand>
</feature>
<feature type="binding site" evidence="1">
    <location>
        <position position="68"/>
    </location>
    <ligand>
        <name>a divalent metal cation</name>
        <dbReference type="ChEBI" id="CHEBI:60240"/>
    </ligand>
</feature>
<feature type="binding site" evidence="1">
    <location>
        <position position="69"/>
    </location>
    <ligand>
        <name>a divalent metal cation</name>
        <dbReference type="ChEBI" id="CHEBI:60240"/>
    </ligand>
</feature>
<feature type="binding site" evidence="1">
    <location>
        <position position="69"/>
    </location>
    <ligand>
        <name>substrate</name>
    </ligand>
</feature>
<feature type="binding site" evidence="1">
    <location>
        <begin position="77"/>
        <end position="80"/>
    </location>
    <ligand>
        <name>substrate</name>
    </ligand>
</feature>
<feature type="binding site" evidence="1">
    <location>
        <position position="137"/>
    </location>
    <ligand>
        <name>a divalent metal cation</name>
        <dbReference type="ChEBI" id="CHEBI:60240"/>
    </ligand>
</feature>
<feature type="binding site" evidence="1">
    <location>
        <position position="137"/>
    </location>
    <ligand>
        <name>substrate</name>
    </ligand>
</feature>
<feature type="site" description="Appears to be important in orienting the phosphate for catalysis" evidence="1">
    <location>
        <position position="18"/>
    </location>
</feature>
<reference key="1">
    <citation type="journal article" date="2011" name="J. Bacteriol.">
        <title>Comparative genomics of 28 Salmonella enterica isolates: evidence for CRISPR-mediated adaptive sublineage evolution.</title>
        <authorList>
            <person name="Fricke W.F."/>
            <person name="Mammel M.K."/>
            <person name="McDermott P.F."/>
            <person name="Tartera C."/>
            <person name="White D.G."/>
            <person name="Leclerc J.E."/>
            <person name="Ravel J."/>
            <person name="Cebula T.A."/>
        </authorList>
    </citation>
    <scope>NUCLEOTIDE SEQUENCE [LARGE SCALE GENOMIC DNA]</scope>
    <source>
        <strain>CT_02021853</strain>
    </source>
</reference>